<sequence length="420" mass="46928">MSKGKVCLAYSGGLDTSVILAWLLDQGYEVVAFMANVGQEEDFDAAKEKALKIGACKFVCVDCREDFVKDILFPAVQVNAVYEDVYLLGTSLARPVIAKAQIDVAKQEGCFAVSHGCTGKGNDQIRFELSFYALKPDVKCITPWRMPEFFERFAGRKDLLDYAAQKGIPVAQTKAKPWSTDENQAHISYEAGILEDPDTTPPKDMWKLIVDPMDAPDQPQDLTIDFERGLPVKLTYTDNKTSKEVSVTKPLDVFLAASNLARANGVGRIDIVEDRYINLKSRGCYEQAPLTVLRKAHVDLEGLTLDKEVRQLRDSFVTPNYSRLIYNGSYFTPECEYIRSMIQPSQNSVNGTVRVRLYKGNVIILGRSTKTEKLYDPTESSMDELTGFLPTDTTGFIAIQAIRIKKYGESKKTKGEELTL</sequence>
<organism>
    <name type="scientific">Saccharomyces cerevisiae (strain ATCC 204508 / S288c)</name>
    <name type="common">Baker's yeast</name>
    <dbReference type="NCBI Taxonomy" id="559292"/>
    <lineage>
        <taxon>Eukaryota</taxon>
        <taxon>Fungi</taxon>
        <taxon>Dikarya</taxon>
        <taxon>Ascomycota</taxon>
        <taxon>Saccharomycotina</taxon>
        <taxon>Saccharomycetes</taxon>
        <taxon>Saccharomycetales</taxon>
        <taxon>Saccharomycetaceae</taxon>
        <taxon>Saccharomyces</taxon>
    </lineage>
</organism>
<evidence type="ECO:0000250" key="1"/>
<evidence type="ECO:0000269" key="2">
    <source>
    </source>
</evidence>
<evidence type="ECO:0000269" key="3">
    <source>
    </source>
</evidence>
<evidence type="ECO:0000269" key="4">
    <source>
    </source>
</evidence>
<evidence type="ECO:0000269" key="5">
    <source>
    </source>
</evidence>
<evidence type="ECO:0000269" key="6">
    <source>
    </source>
</evidence>
<evidence type="ECO:0000305" key="7"/>
<evidence type="ECO:0000305" key="8">
    <source>
    </source>
</evidence>
<evidence type="ECO:0000305" key="9">
    <source>
    </source>
</evidence>
<comment type="function">
    <text evidence="6">Catalyzes the eighth step in arginine biosynthesis. Also has a catabolic function as the first enzyme of citrulline utilization as nitrogen source via arginine and the reactions involved in the arginase pathway.</text>
</comment>
<comment type="catalytic activity">
    <reaction evidence="5 6">
        <text>L-citrulline + L-aspartate + ATP = 2-(N(omega)-L-arginino)succinate + AMP + diphosphate + H(+)</text>
        <dbReference type="Rhea" id="RHEA:10932"/>
        <dbReference type="ChEBI" id="CHEBI:15378"/>
        <dbReference type="ChEBI" id="CHEBI:29991"/>
        <dbReference type="ChEBI" id="CHEBI:30616"/>
        <dbReference type="ChEBI" id="CHEBI:33019"/>
        <dbReference type="ChEBI" id="CHEBI:57472"/>
        <dbReference type="ChEBI" id="CHEBI:57743"/>
        <dbReference type="ChEBI" id="CHEBI:456215"/>
        <dbReference type="EC" id="6.3.4.5"/>
    </reaction>
    <physiologicalReaction direction="left-to-right" evidence="5 6">
        <dbReference type="Rhea" id="RHEA:10933"/>
    </physiologicalReaction>
</comment>
<comment type="biophysicochemical properties">
    <kinetics>
        <KM evidence="6">0.1 mM for L-citrulline</KM>
        <KM evidence="6">0.03 mM for L-aspartate</KM>
        <KM evidence="6">0.3 mM for ATP</KM>
    </kinetics>
    <phDependence>
        <text evidence="6">Optimum pH is 7.5-8.0 for the forward reaction and 6.0-6.5 for the reverse reaction.</text>
    </phDependence>
</comment>
<comment type="pathway">
    <text evidence="8 9">Amino-acid biosynthesis; L-arginine biosynthesis; L-arginine from L-ornithine and carbamoyl phosphate: step 2/3.</text>
</comment>
<comment type="subunit">
    <text evidence="6">Homotetramer.</text>
</comment>
<comment type="subcellular location">
    <subcellularLocation>
        <location evidence="2 4">Cytoplasm</location>
    </subcellularLocation>
</comment>
<comment type="miscellaneous">
    <text evidence="3">Present with 1870 molecules/cell in log phase SD medium.</text>
</comment>
<comment type="similarity">
    <text evidence="7">Belongs to the argininosuccinate synthase family. Type 1 subfamily.</text>
</comment>
<gene>
    <name type="primary">ARG1</name>
    <name type="ordered locus">YOL058W</name>
    <name type="ORF">O1228</name>
</gene>
<keyword id="KW-0028">Amino-acid biosynthesis</keyword>
<keyword id="KW-0055">Arginine biosynthesis</keyword>
<keyword id="KW-0067">ATP-binding</keyword>
<keyword id="KW-0963">Cytoplasm</keyword>
<keyword id="KW-0436">Ligase</keyword>
<keyword id="KW-0547">Nucleotide-binding</keyword>
<keyword id="KW-1185">Reference proteome</keyword>
<reference key="1">
    <citation type="journal article" date="1990" name="Gene">
        <title>Sequences of the genes encoding argininosuccinate synthetase in Escherichia coli and Saccharomyces cerevisiae: comparison with methanogenic archaebacteria and mammals.</title>
        <authorList>
            <person name="van Vliet F."/>
            <person name="Crabeel M."/>
            <person name="Boyen A."/>
            <person name="Tricot C."/>
            <person name="Stalon V."/>
            <person name="Falmagne P."/>
            <person name="Nakamura Y."/>
            <person name="Baumberg S."/>
            <person name="Glansdorff N."/>
        </authorList>
    </citation>
    <scope>NUCLEOTIDE SEQUENCE [GENOMIC DNA]</scope>
</reference>
<reference key="2">
    <citation type="journal article" date="1996" name="Yeast">
        <title>Analysis of a 26 kb region on the left arm of yeast chromosome XV.</title>
        <authorList>
            <person name="Mannhaupt G."/>
            <person name="Vetter I."/>
            <person name="Schwarzlose C."/>
            <person name="Mitzel S."/>
            <person name="Feldmann H."/>
        </authorList>
    </citation>
    <scope>NUCLEOTIDE SEQUENCE [GENOMIC DNA]</scope>
    <source>
        <strain>ATCC 90843 / S288c / FY73</strain>
    </source>
</reference>
<reference key="3">
    <citation type="journal article" date="1997" name="Nature">
        <title>The nucleotide sequence of Saccharomyces cerevisiae chromosome XV.</title>
        <authorList>
            <person name="Dujon B."/>
            <person name="Albermann K."/>
            <person name="Aldea M."/>
            <person name="Alexandraki D."/>
            <person name="Ansorge W."/>
            <person name="Arino J."/>
            <person name="Benes V."/>
            <person name="Bohn C."/>
            <person name="Bolotin-Fukuhara M."/>
            <person name="Bordonne R."/>
            <person name="Boyer J."/>
            <person name="Camasses A."/>
            <person name="Casamayor A."/>
            <person name="Casas C."/>
            <person name="Cheret G."/>
            <person name="Cziepluch C."/>
            <person name="Daignan-Fornier B."/>
            <person name="Dang V.-D."/>
            <person name="de Haan M."/>
            <person name="Delius H."/>
            <person name="Durand P."/>
            <person name="Fairhead C."/>
            <person name="Feldmann H."/>
            <person name="Gaillon L."/>
            <person name="Galisson F."/>
            <person name="Gamo F.-J."/>
            <person name="Gancedo C."/>
            <person name="Goffeau A."/>
            <person name="Goulding S.E."/>
            <person name="Grivell L.A."/>
            <person name="Habbig B."/>
            <person name="Hand N.J."/>
            <person name="Hani J."/>
            <person name="Hattenhorst U."/>
            <person name="Hebling U."/>
            <person name="Hernando Y."/>
            <person name="Herrero E."/>
            <person name="Heumann K."/>
            <person name="Hiesel R."/>
            <person name="Hilger F."/>
            <person name="Hofmann B."/>
            <person name="Hollenberg C.P."/>
            <person name="Hughes B."/>
            <person name="Jauniaux J.-C."/>
            <person name="Kalogeropoulos A."/>
            <person name="Katsoulou C."/>
            <person name="Kordes E."/>
            <person name="Lafuente M.J."/>
            <person name="Landt O."/>
            <person name="Louis E.J."/>
            <person name="Maarse A.C."/>
            <person name="Madania A."/>
            <person name="Mannhaupt G."/>
            <person name="Marck C."/>
            <person name="Martin R.P."/>
            <person name="Mewes H.-W."/>
            <person name="Michaux G."/>
            <person name="Paces V."/>
            <person name="Parle-McDermott A.G."/>
            <person name="Pearson B.M."/>
            <person name="Perrin A."/>
            <person name="Pettersson B."/>
            <person name="Poch O."/>
            <person name="Pohl T.M."/>
            <person name="Poirey R."/>
            <person name="Portetelle D."/>
            <person name="Pujol A."/>
            <person name="Purnelle B."/>
            <person name="Ramezani Rad M."/>
            <person name="Rechmann S."/>
            <person name="Schwager C."/>
            <person name="Schweizer M."/>
            <person name="Sor F."/>
            <person name="Sterky F."/>
            <person name="Tarassov I.A."/>
            <person name="Teodoru C."/>
            <person name="Tettelin H."/>
            <person name="Thierry A."/>
            <person name="Tobiasch E."/>
            <person name="Tzermia M."/>
            <person name="Uhlen M."/>
            <person name="Unseld M."/>
            <person name="Valens M."/>
            <person name="Vandenbol M."/>
            <person name="Vetter I."/>
            <person name="Vlcek C."/>
            <person name="Voet M."/>
            <person name="Volckaert G."/>
            <person name="Voss H."/>
            <person name="Wambutt R."/>
            <person name="Wedler H."/>
            <person name="Wiemann S."/>
            <person name="Winsor B."/>
            <person name="Wolfe K.H."/>
            <person name="Zollner A."/>
            <person name="Zumstein E."/>
            <person name="Kleine K."/>
        </authorList>
    </citation>
    <scope>NUCLEOTIDE SEQUENCE [LARGE SCALE GENOMIC DNA]</scope>
    <source>
        <strain>ATCC 204508 / S288c</strain>
    </source>
</reference>
<reference key="4">
    <citation type="journal article" date="2014" name="G3 (Bethesda)">
        <title>The reference genome sequence of Saccharomyces cerevisiae: Then and now.</title>
        <authorList>
            <person name="Engel S.R."/>
            <person name="Dietrich F.S."/>
            <person name="Fisk D.G."/>
            <person name="Binkley G."/>
            <person name="Balakrishnan R."/>
            <person name="Costanzo M.C."/>
            <person name="Dwight S.S."/>
            <person name="Hitz B.C."/>
            <person name="Karra K."/>
            <person name="Nash R.S."/>
            <person name="Weng S."/>
            <person name="Wong E.D."/>
            <person name="Lloyd P."/>
            <person name="Skrzypek M.S."/>
            <person name="Miyasato S.R."/>
            <person name="Simison M."/>
            <person name="Cherry J.M."/>
        </authorList>
    </citation>
    <scope>GENOME REANNOTATION</scope>
    <scope>SEQUENCE REVISION TO 329-332</scope>
    <source>
        <strain>ATCC 204508 / S288c</strain>
    </source>
</reference>
<reference key="5">
    <citation type="journal article" date="1988" name="Curr. Genet.">
        <title>Arginine repression of the Saccharomyces cerevisiae ARG1 gene. Comparison of the ARG1 and ARG3 control regions.</title>
        <authorList>
            <person name="Crabeel M."/>
            <person name="Seneca S."/>
            <person name="Devos K."/>
            <person name="Glansdorff N."/>
        </authorList>
    </citation>
    <scope>NUCLEOTIDE SEQUENCE [GENOMIC DNA] OF 1-57</scope>
    <scope>CATALYTIC ACTIVITY</scope>
</reference>
<reference key="6">
    <citation type="journal article" date="1978" name="J. Bacteriol.">
        <title>Arginine metabolism in Saccharomyces cerevisiae: subcellular localization of the enzymes.</title>
        <authorList>
            <person name="Jauniaux J.-C."/>
            <person name="Urrestarazu L.A."/>
            <person name="Wiame J.-M."/>
        </authorList>
    </citation>
    <scope>SUBCELLULAR LOCATION</scope>
</reference>
<reference key="7">
    <citation type="journal article" date="1979" name="Eur. J. Biochem.">
        <title>Yeast argininosuccinate synthetase. Purification; structural and kinetic properties.</title>
        <authorList>
            <person name="Hilger F."/>
            <person name="Simon J.-P."/>
            <person name="Stalon V."/>
        </authorList>
    </citation>
    <scope>FUNCTION</scope>
    <scope>SUBUNIT</scope>
    <scope>CATALYTIC ACTIVITY</scope>
    <scope>BIOPHYSICOCHEMICAL PROPERTIES</scope>
</reference>
<reference key="8">
    <citation type="journal article" date="2003" name="Nature">
        <title>Global analysis of protein localization in budding yeast.</title>
        <authorList>
            <person name="Huh W.-K."/>
            <person name="Falvo J.V."/>
            <person name="Gerke L.C."/>
            <person name="Carroll A.S."/>
            <person name="Howson R.W."/>
            <person name="Weissman J.S."/>
            <person name="O'Shea E.K."/>
        </authorList>
    </citation>
    <scope>SUBCELLULAR LOCATION [LARGE SCALE ANALYSIS]</scope>
</reference>
<reference key="9">
    <citation type="journal article" date="2003" name="Nature">
        <title>Global analysis of protein expression in yeast.</title>
        <authorList>
            <person name="Ghaemmaghami S."/>
            <person name="Huh W.-K."/>
            <person name="Bower K."/>
            <person name="Howson R.W."/>
            <person name="Belle A."/>
            <person name="Dephoure N."/>
            <person name="O'Shea E.K."/>
            <person name="Weissman J.S."/>
        </authorList>
    </citation>
    <scope>LEVEL OF PROTEIN EXPRESSION [LARGE SCALE ANALYSIS]</scope>
</reference>
<name>ASSY_YEAST</name>
<accession>P22768</accession>
<accession>D6W209</accession>
<feature type="chain" id="PRO_0000148559" description="Argininosuccinate synthase">
    <location>
        <begin position="1"/>
        <end position="420"/>
    </location>
</feature>
<feature type="binding site" evidence="1">
    <location>
        <begin position="9"/>
        <end position="17"/>
    </location>
    <ligand>
        <name>ATP</name>
        <dbReference type="ChEBI" id="CHEBI:30616"/>
    </ligand>
</feature>
<feature type="binding site" evidence="1">
    <location>
        <position position="35"/>
    </location>
    <ligand>
        <name>ATP</name>
        <dbReference type="ChEBI" id="CHEBI:30616"/>
    </ligand>
</feature>
<feature type="binding site" evidence="1">
    <location>
        <position position="86"/>
    </location>
    <ligand>
        <name>L-citrulline</name>
        <dbReference type="ChEBI" id="CHEBI:57743"/>
    </ligand>
</feature>
<feature type="binding site" evidence="1">
    <location>
        <position position="91"/>
    </location>
    <ligand>
        <name>L-citrulline</name>
        <dbReference type="ChEBI" id="CHEBI:57743"/>
    </ligand>
</feature>
<feature type="binding site" evidence="1">
    <location>
        <begin position="114"/>
        <end position="122"/>
    </location>
    <ligand>
        <name>ATP</name>
        <dbReference type="ChEBI" id="CHEBI:30616"/>
    </ligand>
</feature>
<feature type="binding site" evidence="1">
    <location>
        <position position="118"/>
    </location>
    <ligand>
        <name>L-aspartate</name>
        <dbReference type="ChEBI" id="CHEBI:29991"/>
    </ligand>
</feature>
<feature type="binding site" evidence="1">
    <location>
        <position position="122"/>
    </location>
    <ligand>
        <name>L-aspartate</name>
        <dbReference type="ChEBI" id="CHEBI:29991"/>
    </ligand>
</feature>
<feature type="binding site" evidence="1">
    <location>
        <position position="122"/>
    </location>
    <ligand>
        <name>L-citrulline</name>
        <dbReference type="ChEBI" id="CHEBI:57743"/>
    </ligand>
</feature>
<feature type="binding site" evidence="1">
    <location>
        <position position="123"/>
    </location>
    <ligand>
        <name>L-aspartate</name>
        <dbReference type="ChEBI" id="CHEBI:29991"/>
    </ligand>
</feature>
<feature type="binding site" evidence="1">
    <location>
        <position position="126"/>
    </location>
    <ligand>
        <name>L-citrulline</name>
        <dbReference type="ChEBI" id="CHEBI:57743"/>
    </ligand>
</feature>
<feature type="binding site" evidence="1">
    <location>
        <position position="179"/>
    </location>
    <ligand>
        <name>L-citrulline</name>
        <dbReference type="ChEBI" id="CHEBI:57743"/>
    </ligand>
</feature>
<feature type="binding site" evidence="1">
    <location>
        <position position="188"/>
    </location>
    <ligand>
        <name>L-citrulline</name>
        <dbReference type="ChEBI" id="CHEBI:57743"/>
    </ligand>
</feature>
<feature type="binding site" evidence="1">
    <location>
        <position position="273"/>
    </location>
    <ligand>
        <name>L-citrulline</name>
        <dbReference type="ChEBI" id="CHEBI:57743"/>
    </ligand>
</feature>
<feature type="binding site" evidence="1">
    <location>
        <position position="285"/>
    </location>
    <ligand>
        <name>L-citrulline</name>
        <dbReference type="ChEBI" id="CHEBI:57743"/>
    </ligand>
</feature>
<feature type="sequence conflict" description="In Ref. 1; AAA34437 and 5; CAA30106." evidence="7" ref="1 5">
    <original>GY</original>
    <variation>AT</variation>
    <location>
        <begin position="27"/>
        <end position="28"/>
    </location>
</feature>
<feature type="sequence conflict" description="In Ref. 1; AAA34437 and 5; CAA30106." evidence="7" ref="1 5">
    <original>EK</original>
    <variation>VL</variation>
    <location>
        <begin position="48"/>
        <end position="49"/>
    </location>
</feature>
<feature type="sequence conflict" description="In Ref. 1; AAA34437." evidence="7" ref="1">
    <original>VDCR</original>
    <variation>GGLS</variation>
    <location>
        <begin position="61"/>
        <end position="64"/>
    </location>
</feature>
<feature type="sequence conflict" description="In Ref. 1; AAA34437." evidence="7" ref="1">
    <original>P</original>
    <variation>F</variation>
    <location>
        <position position="169"/>
    </location>
</feature>
<feature type="sequence conflict" description="In Ref. 1; AAA34437." evidence="7" ref="1">
    <original>F</original>
    <variation>L</variation>
    <location>
        <position position="316"/>
    </location>
</feature>
<feature type="sequence conflict" description="In Ref. 1; AAA34437, 2; CAA62528 and 3; CAA99067." evidence="7" ref="1 2 3">
    <original>SYFT</original>
    <variation>FLLH</variation>
    <location>
        <begin position="329"/>
        <end position="332"/>
    </location>
</feature>
<protein>
    <recommendedName>
        <fullName>Argininosuccinate synthase</fullName>
        <ecNumber evidence="5 6">6.3.4.5</ecNumber>
    </recommendedName>
    <alternativeName>
        <fullName>Citrulline--aspartate ligase</fullName>
    </alternativeName>
</protein>
<proteinExistence type="evidence at protein level"/>
<dbReference type="EC" id="6.3.4.5" evidence="5 6"/>
<dbReference type="EMBL" id="M35237">
    <property type="protein sequence ID" value="AAA34437.1"/>
    <property type="molecule type" value="Genomic_DNA"/>
</dbReference>
<dbReference type="EMBL" id="X91067">
    <property type="protein sequence ID" value="CAA62528.1"/>
    <property type="molecule type" value="Genomic_DNA"/>
</dbReference>
<dbReference type="EMBL" id="Z74800">
    <property type="protein sequence ID" value="CAA99067.1"/>
    <property type="molecule type" value="Genomic_DNA"/>
</dbReference>
<dbReference type="EMBL" id="X07070">
    <property type="protein sequence ID" value="CAA30106.1"/>
    <property type="molecule type" value="Genomic_DNA"/>
</dbReference>
<dbReference type="EMBL" id="BK006948">
    <property type="protein sequence ID" value="DAA10725.2"/>
    <property type="molecule type" value="Genomic_DNA"/>
</dbReference>
<dbReference type="PIR" id="S59291">
    <property type="entry name" value="AJBYRS"/>
</dbReference>
<dbReference type="RefSeq" id="NP_014583.2">
    <property type="nucleotide sequence ID" value="NM_001183313.2"/>
</dbReference>
<dbReference type="SMR" id="P22768"/>
<dbReference type="BioGRID" id="34343">
    <property type="interactions" value="32"/>
</dbReference>
<dbReference type="DIP" id="DIP-1660N"/>
<dbReference type="FunCoup" id="P22768">
    <property type="interactions" value="1242"/>
</dbReference>
<dbReference type="IntAct" id="P22768">
    <property type="interactions" value="5"/>
</dbReference>
<dbReference type="MINT" id="P22768"/>
<dbReference type="STRING" id="4932.YOL058W"/>
<dbReference type="iPTMnet" id="P22768"/>
<dbReference type="PaxDb" id="4932-YOL058W"/>
<dbReference type="PeptideAtlas" id="P22768"/>
<dbReference type="EnsemblFungi" id="YOL058W_mRNA">
    <property type="protein sequence ID" value="YOL058W"/>
    <property type="gene ID" value="YOL058W"/>
</dbReference>
<dbReference type="GeneID" id="854096"/>
<dbReference type="KEGG" id="sce:YOL058W"/>
<dbReference type="AGR" id="SGD:S000005419"/>
<dbReference type="SGD" id="S000005419">
    <property type="gene designation" value="ARG1"/>
</dbReference>
<dbReference type="VEuPathDB" id="FungiDB:YOL058W"/>
<dbReference type="eggNOG" id="KOG1706">
    <property type="taxonomic scope" value="Eukaryota"/>
</dbReference>
<dbReference type="GeneTree" id="ENSGT00390000004524"/>
<dbReference type="HOGENOM" id="CLU_032784_4_2_1"/>
<dbReference type="InParanoid" id="P22768"/>
<dbReference type="OMA" id="WRWTVSP"/>
<dbReference type="OrthoDB" id="1688907at2759"/>
<dbReference type="BioCyc" id="YEAST:YOL058W-MONOMER"/>
<dbReference type="UniPathway" id="UPA00068">
    <property type="reaction ID" value="UER00113"/>
</dbReference>
<dbReference type="BioGRID-ORCS" id="854096">
    <property type="hits" value="8 hits in 10 CRISPR screens"/>
</dbReference>
<dbReference type="PRO" id="PR:P22768"/>
<dbReference type="Proteomes" id="UP000002311">
    <property type="component" value="Chromosome XV"/>
</dbReference>
<dbReference type="RNAct" id="P22768">
    <property type="molecule type" value="protein"/>
</dbReference>
<dbReference type="GO" id="GO:0005737">
    <property type="term" value="C:cytoplasm"/>
    <property type="evidence" value="ECO:0000318"/>
    <property type="project" value="GO_Central"/>
</dbReference>
<dbReference type="GO" id="GO:0005829">
    <property type="term" value="C:cytosol"/>
    <property type="evidence" value="ECO:0000314"/>
    <property type="project" value="SGD"/>
</dbReference>
<dbReference type="GO" id="GO:0004055">
    <property type="term" value="F:argininosuccinate synthase activity"/>
    <property type="evidence" value="ECO:0000314"/>
    <property type="project" value="SGD"/>
</dbReference>
<dbReference type="GO" id="GO:0005524">
    <property type="term" value="F:ATP binding"/>
    <property type="evidence" value="ECO:0007669"/>
    <property type="project" value="UniProtKB-KW"/>
</dbReference>
<dbReference type="GO" id="GO:0000053">
    <property type="term" value="P:argininosuccinate metabolic process"/>
    <property type="evidence" value="ECO:0000318"/>
    <property type="project" value="GO_Central"/>
</dbReference>
<dbReference type="GO" id="GO:0006526">
    <property type="term" value="P:L-arginine biosynthetic process"/>
    <property type="evidence" value="ECO:0000315"/>
    <property type="project" value="SGD"/>
</dbReference>
<dbReference type="GO" id="GO:0000050">
    <property type="term" value="P:urea cycle"/>
    <property type="evidence" value="ECO:0000318"/>
    <property type="project" value="GO_Central"/>
</dbReference>
<dbReference type="CDD" id="cd01999">
    <property type="entry name" value="ASS"/>
    <property type="match status" value="1"/>
</dbReference>
<dbReference type="FunFam" id="3.40.50.620:FF:000019">
    <property type="entry name" value="Argininosuccinate synthase"/>
    <property type="match status" value="1"/>
</dbReference>
<dbReference type="FunFam" id="3.90.1260.10:FF:000003">
    <property type="entry name" value="Argininosuccinate synthase"/>
    <property type="match status" value="1"/>
</dbReference>
<dbReference type="Gene3D" id="3.90.1260.10">
    <property type="entry name" value="Argininosuccinate synthetase, chain A, domain 2"/>
    <property type="match status" value="1"/>
</dbReference>
<dbReference type="Gene3D" id="3.40.50.620">
    <property type="entry name" value="HUPs"/>
    <property type="match status" value="1"/>
</dbReference>
<dbReference type="HAMAP" id="MF_00005">
    <property type="entry name" value="Arg_succ_synth_type1"/>
    <property type="match status" value="1"/>
</dbReference>
<dbReference type="InterPro" id="IPR048268">
    <property type="entry name" value="Arginosuc_syn_C"/>
</dbReference>
<dbReference type="InterPro" id="IPR048267">
    <property type="entry name" value="Arginosuc_syn_N"/>
</dbReference>
<dbReference type="InterPro" id="IPR001518">
    <property type="entry name" value="Arginosuc_synth"/>
</dbReference>
<dbReference type="InterPro" id="IPR018223">
    <property type="entry name" value="Arginosuc_synth_CS"/>
</dbReference>
<dbReference type="InterPro" id="IPR023434">
    <property type="entry name" value="Arginosuc_synth_type_1_subfam"/>
</dbReference>
<dbReference type="InterPro" id="IPR024074">
    <property type="entry name" value="AS_cat/multimer_dom_body"/>
</dbReference>
<dbReference type="InterPro" id="IPR014729">
    <property type="entry name" value="Rossmann-like_a/b/a_fold"/>
</dbReference>
<dbReference type="NCBIfam" id="TIGR00032">
    <property type="entry name" value="argG"/>
    <property type="match status" value="1"/>
</dbReference>
<dbReference type="NCBIfam" id="NF001770">
    <property type="entry name" value="PRK00509.1"/>
    <property type="match status" value="1"/>
</dbReference>
<dbReference type="PANTHER" id="PTHR11587">
    <property type="entry name" value="ARGININOSUCCINATE SYNTHASE"/>
    <property type="match status" value="1"/>
</dbReference>
<dbReference type="PANTHER" id="PTHR11587:SF2">
    <property type="entry name" value="ARGININOSUCCINATE SYNTHASE"/>
    <property type="match status" value="1"/>
</dbReference>
<dbReference type="Pfam" id="PF20979">
    <property type="entry name" value="Arginosuc_syn_C"/>
    <property type="match status" value="1"/>
</dbReference>
<dbReference type="Pfam" id="PF00764">
    <property type="entry name" value="Arginosuc_synth"/>
    <property type="match status" value="1"/>
</dbReference>
<dbReference type="SUPFAM" id="SSF52402">
    <property type="entry name" value="Adenine nucleotide alpha hydrolases-like"/>
    <property type="match status" value="1"/>
</dbReference>
<dbReference type="SUPFAM" id="SSF69864">
    <property type="entry name" value="Argininosuccinate synthetase, C-terminal domain"/>
    <property type="match status" value="1"/>
</dbReference>
<dbReference type="PROSITE" id="PS00564">
    <property type="entry name" value="ARGININOSUCCIN_SYN_1"/>
    <property type="match status" value="1"/>
</dbReference>
<dbReference type="PROSITE" id="PS00565">
    <property type="entry name" value="ARGININOSUCCIN_SYN_2"/>
    <property type="match status" value="1"/>
</dbReference>